<proteinExistence type="evidence at protein level"/>
<protein>
    <recommendedName>
        <fullName>Inositol-3-phosphate synthase isozyme 2</fullName>
        <shortName>AtIPS2</shortName>
        <shortName>MIP synthase 2</shortName>
        <ecNumber>5.5.1.4</ecNumber>
    </recommendedName>
    <alternativeName>
        <fullName>Myo-inositol 1-phosphate synthase 2</fullName>
        <shortName>AtMIPS 2</shortName>
        <shortName>MI-1-P synthase 2</shortName>
    </alternativeName>
</protein>
<sequence length="510" mass="56337">MFIESFKVESPNVKYTENEINSVYDYETTEVVHENRNGTYQWVVKPKTVKYDFKTDTRVPKLGVMLVGWGGNNGSTLTAGVIANKEGISWATKDKVQQANYFGSLTQASSIRVGSYNGEEIYAPFKSLLPMVNPEDVVFGGWDISDMNLADAMARARVLDIDLQKQLRPYMENMIPLPGIYDPDFIAANQGSRANSVIKGTKKEQVDHIIKDMREFKEKNKVDKLVVLWTANTERYSNVIVGLNDTTENLLASVEKDESEISPSTLYAIACVLEGIPFINGSPQNTFVPGLIELAISKNCLIGGDDFKSGQTKMKSVLVDFLVGAGIKPTSIVSYNHLGNNDGMNLSAPQTFRSKEISKSNVVDDMVASNGILFEPGEHPDHVVVIKYVPYVADSKRAMDEYTSEIFMGGRNTIVLHNTCEDSLLAAPIILDLVLLAELSTRIQFKAEGEGKFHSFHPVATILSYLTKAPLVPPGTPVVNALSKQRAMLENILRACVGLAPENNMIMEYK</sequence>
<name>INO2_ARATH</name>
<accession>Q38862</accession>
<accession>Q9SIE2</accession>
<organism>
    <name type="scientific">Arabidopsis thaliana</name>
    <name type="common">Mouse-ear cress</name>
    <dbReference type="NCBI Taxonomy" id="3702"/>
    <lineage>
        <taxon>Eukaryota</taxon>
        <taxon>Viridiplantae</taxon>
        <taxon>Streptophyta</taxon>
        <taxon>Embryophyta</taxon>
        <taxon>Tracheophyta</taxon>
        <taxon>Spermatophyta</taxon>
        <taxon>Magnoliopsida</taxon>
        <taxon>eudicotyledons</taxon>
        <taxon>Gunneridae</taxon>
        <taxon>Pentapetalae</taxon>
        <taxon>rosids</taxon>
        <taxon>malvids</taxon>
        <taxon>Brassicales</taxon>
        <taxon>Brassicaceae</taxon>
        <taxon>Camelineae</taxon>
        <taxon>Arabidopsis</taxon>
    </lineage>
</organism>
<dbReference type="EC" id="5.5.1.4"/>
<dbReference type="EMBL" id="U30250">
    <property type="protein sequence ID" value="AAC49172.1"/>
    <property type="molecule type" value="mRNA"/>
</dbReference>
<dbReference type="EMBL" id="AC007168">
    <property type="protein sequence ID" value="AAD23618.1"/>
    <property type="molecule type" value="Genomic_DNA"/>
</dbReference>
<dbReference type="EMBL" id="CP002685">
    <property type="protein sequence ID" value="AEC07280.1"/>
    <property type="molecule type" value="Genomic_DNA"/>
</dbReference>
<dbReference type="EMBL" id="AY053415">
    <property type="protein sequence ID" value="AAK96645.1"/>
    <property type="molecule type" value="mRNA"/>
</dbReference>
<dbReference type="EMBL" id="AY054202">
    <property type="protein sequence ID" value="AAL06863.1"/>
    <property type="molecule type" value="mRNA"/>
</dbReference>
<dbReference type="EMBL" id="AY143904">
    <property type="protein sequence ID" value="AAN28843.1"/>
    <property type="molecule type" value="mRNA"/>
</dbReference>
<dbReference type="PIR" id="D84610">
    <property type="entry name" value="D84610"/>
</dbReference>
<dbReference type="RefSeq" id="NP_179812.1">
    <molecule id="Q38862-1"/>
    <property type="nucleotide sequence ID" value="NM_127790.4"/>
</dbReference>
<dbReference type="SMR" id="Q38862"/>
<dbReference type="BioGRID" id="2110">
    <property type="interactions" value="2"/>
</dbReference>
<dbReference type="FunCoup" id="Q38862">
    <property type="interactions" value="2094"/>
</dbReference>
<dbReference type="IntAct" id="Q38862">
    <property type="interactions" value="2"/>
</dbReference>
<dbReference type="STRING" id="3702.Q38862"/>
<dbReference type="PaxDb" id="3702-AT2G22240.1"/>
<dbReference type="EnsemblPlants" id="AT2G22240.1">
    <molecule id="Q38862-1"/>
    <property type="protein sequence ID" value="AT2G22240.1"/>
    <property type="gene ID" value="AT2G22240"/>
</dbReference>
<dbReference type="GeneID" id="816757"/>
<dbReference type="Gramene" id="AT2G22240.1">
    <molecule id="Q38862-1"/>
    <property type="protein sequence ID" value="AT2G22240.1"/>
    <property type="gene ID" value="AT2G22240"/>
</dbReference>
<dbReference type="KEGG" id="ath:AT2G22240"/>
<dbReference type="Araport" id="AT2G22240"/>
<dbReference type="TAIR" id="AT2G22240">
    <property type="gene designation" value="MIPS2"/>
</dbReference>
<dbReference type="eggNOG" id="KOG0693">
    <property type="taxonomic scope" value="Eukaryota"/>
</dbReference>
<dbReference type="HOGENOM" id="CLU_021486_2_0_1"/>
<dbReference type="InParanoid" id="Q38862"/>
<dbReference type="OrthoDB" id="2887at2759"/>
<dbReference type="PhylomeDB" id="Q38862"/>
<dbReference type="BioCyc" id="ARA:AT2G22240-MONOMER"/>
<dbReference type="BRENDA" id="5.5.1.4">
    <property type="organism ID" value="399"/>
</dbReference>
<dbReference type="SABIO-RK" id="Q38862"/>
<dbReference type="UniPathway" id="UPA00823">
    <property type="reaction ID" value="UER00787"/>
</dbReference>
<dbReference type="PRO" id="PR:Q38862"/>
<dbReference type="Proteomes" id="UP000006548">
    <property type="component" value="Chromosome 2"/>
</dbReference>
<dbReference type="ExpressionAtlas" id="Q38862">
    <property type="expression patterns" value="baseline and differential"/>
</dbReference>
<dbReference type="GO" id="GO:0005737">
    <property type="term" value="C:cytoplasm"/>
    <property type="evidence" value="ECO:0000314"/>
    <property type="project" value="TAIR"/>
</dbReference>
<dbReference type="GO" id="GO:0004512">
    <property type="term" value="F:inositol-3-phosphate synthase activity"/>
    <property type="evidence" value="ECO:0000316"/>
    <property type="project" value="TAIR"/>
</dbReference>
<dbReference type="GO" id="GO:0016036">
    <property type="term" value="P:cellular response to phosphate starvation"/>
    <property type="evidence" value="ECO:0000304"/>
    <property type="project" value="TAIR"/>
</dbReference>
<dbReference type="GO" id="GO:0042742">
    <property type="term" value="P:defense response to bacterium"/>
    <property type="evidence" value="ECO:0000315"/>
    <property type="project" value="TAIR"/>
</dbReference>
<dbReference type="GO" id="GO:0050832">
    <property type="term" value="P:defense response to fungus"/>
    <property type="evidence" value="ECO:0000315"/>
    <property type="project" value="TAIR"/>
</dbReference>
<dbReference type="GO" id="GO:0051607">
    <property type="term" value="P:defense response to virus"/>
    <property type="evidence" value="ECO:0000315"/>
    <property type="project" value="TAIR"/>
</dbReference>
<dbReference type="GO" id="GO:0009793">
    <property type="term" value="P:embryo development ending in seed dormancy"/>
    <property type="evidence" value="ECO:0000316"/>
    <property type="project" value="TAIR"/>
</dbReference>
<dbReference type="GO" id="GO:0006021">
    <property type="term" value="P:inositol biosynthetic process"/>
    <property type="evidence" value="ECO:0007669"/>
    <property type="project" value="UniProtKB-UniPathway"/>
</dbReference>
<dbReference type="GO" id="GO:0010264">
    <property type="term" value="P:myo-inositol hexakisphosphate biosynthetic process"/>
    <property type="evidence" value="ECO:0000315"/>
    <property type="project" value="TAIR"/>
</dbReference>
<dbReference type="GO" id="GO:0008654">
    <property type="term" value="P:phospholipid biosynthetic process"/>
    <property type="evidence" value="ECO:0007669"/>
    <property type="project" value="UniProtKB-KW"/>
</dbReference>
<dbReference type="GO" id="GO:0009733">
    <property type="term" value="P:response to auxin"/>
    <property type="evidence" value="ECO:0000304"/>
    <property type="project" value="TAIR"/>
</dbReference>
<dbReference type="FunFam" id="3.40.50.720:FF:000107">
    <property type="entry name" value="inositol-3-phosphate synthase"/>
    <property type="match status" value="1"/>
</dbReference>
<dbReference type="FunFam" id="3.40.50.720:FF:000069">
    <property type="entry name" value="Inositol-3-phosphate synthase 1"/>
    <property type="match status" value="1"/>
</dbReference>
<dbReference type="FunFam" id="3.30.360.10:FF:000055">
    <property type="entry name" value="Putative myo-inositol-1-phosphate synthase"/>
    <property type="match status" value="1"/>
</dbReference>
<dbReference type="Gene3D" id="3.40.50.720">
    <property type="entry name" value="NAD(P)-binding Rossmann-like Domain"/>
    <property type="match status" value="2"/>
</dbReference>
<dbReference type="InterPro" id="IPR002587">
    <property type="entry name" value="Myo-inos-1-P_Synthase"/>
</dbReference>
<dbReference type="InterPro" id="IPR013021">
    <property type="entry name" value="Myo-inos-1-P_Synthase_GAPDH"/>
</dbReference>
<dbReference type="InterPro" id="IPR036291">
    <property type="entry name" value="NAD(P)-bd_dom_sf"/>
</dbReference>
<dbReference type="PANTHER" id="PTHR11510">
    <property type="entry name" value="MYO-INOSITOL-1 PHOSPHATE SYNTHASE"/>
    <property type="match status" value="1"/>
</dbReference>
<dbReference type="Pfam" id="PF01658">
    <property type="entry name" value="Inos-1-P_synth"/>
    <property type="match status" value="1"/>
</dbReference>
<dbReference type="Pfam" id="PF07994">
    <property type="entry name" value="NAD_binding_5"/>
    <property type="match status" value="1"/>
</dbReference>
<dbReference type="PIRSF" id="PIRSF015578">
    <property type="entry name" value="Myoinos-ppht_syn"/>
    <property type="match status" value="1"/>
</dbReference>
<dbReference type="SUPFAM" id="SSF55347">
    <property type="entry name" value="Glyceraldehyde-3-phosphate dehydrogenase-like, C-terminal domain"/>
    <property type="match status" value="1"/>
</dbReference>
<dbReference type="SUPFAM" id="SSF51735">
    <property type="entry name" value="NAD(P)-binding Rossmann-fold domains"/>
    <property type="match status" value="1"/>
</dbReference>
<feature type="chain" id="PRO_0000195187" description="Inositol-3-phosphate synthase isozyme 2">
    <location>
        <begin position="1"/>
        <end position="510"/>
    </location>
</feature>
<feature type="sequence conflict" description="In Ref. 1; AAC49172." evidence="5" ref="1">
    <original>E</original>
    <variation>D</variation>
    <location>
        <position position="135"/>
    </location>
</feature>
<feature type="sequence conflict" description="In Ref. 1; AAC49172." evidence="5" ref="1">
    <original>F</original>
    <variation>L</variation>
    <location>
        <position position="287"/>
    </location>
</feature>
<feature type="sequence conflict" description="In Ref. 1; AAC49172." evidence="5" ref="1">
    <original>K</original>
    <variation>N</variation>
    <location>
        <position position="298"/>
    </location>
</feature>
<feature type="sequence conflict" description="In Ref. 1; AAC49172." evidence="5" ref="1">
    <original>L</original>
    <variation>W</variation>
    <location>
        <position position="318"/>
    </location>
</feature>
<feature type="sequence conflict" description="In Ref. 1; AAC49172." evidence="5" ref="1">
    <original>P</original>
    <variation>A</variation>
    <location>
        <position position="477"/>
    </location>
</feature>
<feature type="sequence conflict" description="In Ref. 1; AAC49172." evidence="5" ref="1">
    <original>A</original>
    <variation>P</variation>
    <location>
        <position position="487"/>
    </location>
</feature>
<keyword id="KW-0025">Alternative splicing</keyword>
<keyword id="KW-0963">Cytoplasm</keyword>
<keyword id="KW-0398">Inositol biosynthesis</keyword>
<keyword id="KW-0413">Isomerase</keyword>
<keyword id="KW-0444">Lipid biosynthesis</keyword>
<keyword id="KW-0443">Lipid metabolism</keyword>
<keyword id="KW-0520">NAD</keyword>
<keyword id="KW-0594">Phospholipid biosynthesis</keyword>
<keyword id="KW-1208">Phospholipid metabolism</keyword>
<keyword id="KW-1185">Reference proteome</keyword>
<evidence type="ECO:0000269" key="1">
    <source>
    </source>
</evidence>
<evidence type="ECO:0000269" key="2">
    <source>
    </source>
</evidence>
<evidence type="ECO:0000269" key="3">
    <source>
    </source>
</evidence>
<evidence type="ECO:0000269" key="4">
    <source>
    </source>
</evidence>
<evidence type="ECO:0000305" key="5"/>
<comment type="function">
    <text evidence="4">Key enzyme in myo-inositol biosynthesis pathway that catalyzes the conversion of glucose 6-phosphate to 1-myo-inositol 1-phosphate in a NAD-dependent manner.</text>
</comment>
<comment type="catalytic activity">
    <reaction evidence="4">
        <text>D-glucose 6-phosphate = 1D-myo-inositol 3-phosphate</text>
        <dbReference type="Rhea" id="RHEA:10716"/>
        <dbReference type="ChEBI" id="CHEBI:58401"/>
        <dbReference type="ChEBI" id="CHEBI:61548"/>
        <dbReference type="EC" id="5.5.1.4"/>
    </reaction>
</comment>
<comment type="cofactor">
    <cofactor>
        <name>NAD(+)</name>
        <dbReference type="ChEBI" id="CHEBI:57540"/>
    </cofactor>
</comment>
<comment type="biophysicochemical properties">
    <kinetics>
        <KM evidence="4">0.45 mM for D-glucose 6-phosphate</KM>
        <KM evidence="4">0.3 uM for NAD(+)</KM>
        <text>kcat is 4.0 min(-1) for D-glucose 6-phosphate. kcat is 3.6 min(-1) for NAD(+).</text>
    </kinetics>
</comment>
<comment type="pathway">
    <text>Polyol metabolism; myo-inositol biosynthesis; myo-inositol from D-glucose 6-phosphate: step 1/2.</text>
</comment>
<comment type="subcellular location">
    <subcellularLocation>
        <location evidence="1 4">Cytoplasm</location>
    </subcellularLocation>
</comment>
<comment type="alternative products">
    <event type="alternative splicing"/>
    <isoform>
        <id>Q38862-1</id>
        <name>1</name>
        <sequence type="displayed"/>
    </isoform>
    <text>A number of isoforms are produced. According to EST sequences.</text>
</comment>
<comment type="tissue specificity">
    <text evidence="1 4">Expressed in siliques, leaves, roots, seed endosperm, but not in embryos. Highest expression in seeds. In leaves, only expressed in hydathodes and vascular tissue.</text>
</comment>
<comment type="disruption phenotype">
    <text evidence="2 3 4">No spontaneous lesion formation and no significant alteration in the response to abscisic acid. Increased susceptibility to bacterial and fungal pathogens.</text>
</comment>
<comment type="similarity">
    <text evidence="5">Belongs to the myo-inositol 1-phosphate synthase family.</text>
</comment>
<comment type="caution">
    <text evidence="5">Was called MIPS1 in PubMed:18603618.</text>
</comment>
<reference key="1">
    <citation type="online journal article" date="1995" name="Plant Gene Register">
        <title>Isozyme of 1L-myo-inositol1-phosphate synthase from Arabidopsis.</title>
        <authorList>
            <person name="Johnson M.D."/>
            <person name="Burk D.H."/>
        </authorList>
        <locator>PGR95-067</locator>
    </citation>
    <scope>NUCLEOTIDE SEQUENCE [MRNA]</scope>
    <source>
        <strain>cv. Columbia</strain>
    </source>
</reference>
<reference key="2">
    <citation type="journal article" date="1999" name="Nature">
        <title>Sequence and analysis of chromosome 2 of the plant Arabidopsis thaliana.</title>
        <authorList>
            <person name="Lin X."/>
            <person name="Kaul S."/>
            <person name="Rounsley S.D."/>
            <person name="Shea T.P."/>
            <person name="Benito M.-I."/>
            <person name="Town C.D."/>
            <person name="Fujii C.Y."/>
            <person name="Mason T.M."/>
            <person name="Bowman C.L."/>
            <person name="Barnstead M.E."/>
            <person name="Feldblyum T.V."/>
            <person name="Buell C.R."/>
            <person name="Ketchum K.A."/>
            <person name="Lee J.J."/>
            <person name="Ronning C.M."/>
            <person name="Koo H.L."/>
            <person name="Moffat K.S."/>
            <person name="Cronin L.A."/>
            <person name="Shen M."/>
            <person name="Pai G."/>
            <person name="Van Aken S."/>
            <person name="Umayam L."/>
            <person name="Tallon L.J."/>
            <person name="Gill J.E."/>
            <person name="Adams M.D."/>
            <person name="Carrera A.J."/>
            <person name="Creasy T.H."/>
            <person name="Goodman H.M."/>
            <person name="Somerville C.R."/>
            <person name="Copenhaver G.P."/>
            <person name="Preuss D."/>
            <person name="Nierman W.C."/>
            <person name="White O."/>
            <person name="Eisen J.A."/>
            <person name="Salzberg S.L."/>
            <person name="Fraser C.M."/>
            <person name="Venter J.C."/>
        </authorList>
    </citation>
    <scope>NUCLEOTIDE SEQUENCE [LARGE SCALE GENOMIC DNA]</scope>
    <source>
        <strain>cv. Columbia</strain>
    </source>
</reference>
<reference key="3">
    <citation type="journal article" date="2017" name="Plant J.">
        <title>Araport11: a complete reannotation of the Arabidopsis thaliana reference genome.</title>
        <authorList>
            <person name="Cheng C.Y."/>
            <person name="Krishnakumar V."/>
            <person name="Chan A.P."/>
            <person name="Thibaud-Nissen F."/>
            <person name="Schobel S."/>
            <person name="Town C.D."/>
        </authorList>
    </citation>
    <scope>GENOME REANNOTATION</scope>
    <source>
        <strain>cv. Columbia</strain>
    </source>
</reference>
<reference key="4">
    <citation type="journal article" date="2003" name="Science">
        <title>Empirical analysis of transcriptional activity in the Arabidopsis genome.</title>
        <authorList>
            <person name="Yamada K."/>
            <person name="Lim J."/>
            <person name="Dale J.M."/>
            <person name="Chen H."/>
            <person name="Shinn P."/>
            <person name="Palm C.J."/>
            <person name="Southwick A.M."/>
            <person name="Wu H.C."/>
            <person name="Kim C.J."/>
            <person name="Nguyen M."/>
            <person name="Pham P.K."/>
            <person name="Cheuk R.F."/>
            <person name="Karlin-Newmann G."/>
            <person name="Liu S.X."/>
            <person name="Lam B."/>
            <person name="Sakano H."/>
            <person name="Wu T."/>
            <person name="Yu G."/>
            <person name="Miranda M."/>
            <person name="Quach H.L."/>
            <person name="Tripp M."/>
            <person name="Chang C.H."/>
            <person name="Lee J.M."/>
            <person name="Toriumi M.J."/>
            <person name="Chan M.M."/>
            <person name="Tang C.C."/>
            <person name="Onodera C.S."/>
            <person name="Deng J.M."/>
            <person name="Akiyama K."/>
            <person name="Ansari Y."/>
            <person name="Arakawa T."/>
            <person name="Banh J."/>
            <person name="Banno F."/>
            <person name="Bowser L."/>
            <person name="Brooks S.Y."/>
            <person name="Carninci P."/>
            <person name="Chao Q."/>
            <person name="Choy N."/>
            <person name="Enju A."/>
            <person name="Goldsmith A.D."/>
            <person name="Gurjal M."/>
            <person name="Hansen N.F."/>
            <person name="Hayashizaki Y."/>
            <person name="Johnson-Hopson C."/>
            <person name="Hsuan V.W."/>
            <person name="Iida K."/>
            <person name="Karnes M."/>
            <person name="Khan S."/>
            <person name="Koesema E."/>
            <person name="Ishida J."/>
            <person name="Jiang P.X."/>
            <person name="Jones T."/>
            <person name="Kawai J."/>
            <person name="Kamiya A."/>
            <person name="Meyers C."/>
            <person name="Nakajima M."/>
            <person name="Narusaka M."/>
            <person name="Seki M."/>
            <person name="Sakurai T."/>
            <person name="Satou M."/>
            <person name="Tamse R."/>
            <person name="Vaysberg M."/>
            <person name="Wallender E.K."/>
            <person name="Wong C."/>
            <person name="Yamamura Y."/>
            <person name="Yuan S."/>
            <person name="Shinozaki K."/>
            <person name="Davis R.W."/>
            <person name="Theologis A."/>
            <person name="Ecker J.R."/>
        </authorList>
    </citation>
    <scope>NUCLEOTIDE SEQUENCE [LARGE SCALE MRNA]</scope>
    <source>
        <strain>cv. Columbia</strain>
    </source>
</reference>
<reference key="5">
    <citation type="journal article" date="2008" name="J. Exp. Bot.">
        <title>Localization of myo-inositol-1-phosphate synthase to the endosperm in developing seeds of Arabidopsis.</title>
        <authorList>
            <person name="Mitsuhashi N."/>
            <person name="Kondo M."/>
            <person name="Nakaune S."/>
            <person name="Ohnishi M."/>
            <person name="Hayashi M."/>
            <person name="Hara-Nishimura I."/>
            <person name="Richardson A."/>
            <person name="Fukaki H."/>
            <person name="Nishimura M."/>
            <person name="Mimura T."/>
        </authorList>
    </citation>
    <scope>TISSUE SPECIFICITY</scope>
    <scope>SUBCELLULAR LOCATION</scope>
    <source>
        <strain>cv. Columbia</strain>
    </source>
</reference>
<reference key="6">
    <citation type="journal article" date="2008" name="Plant J.">
        <title>A role for inositol hexakisphosphate in the maintenance of basal resistance to plant pathogens.</title>
        <authorList>
            <person name="Murphy A.M."/>
            <person name="Otto B."/>
            <person name="Brearley C.A."/>
            <person name="Carr J.P."/>
            <person name="Hanke D.E."/>
        </authorList>
    </citation>
    <scope>DISRUPTION PHENOTYPE</scope>
</reference>
<reference key="7">
    <citation type="journal article" date="2009" name="PLoS ONE">
        <title>Crosstalks between myo-inositol metabolism, programmed cell death and basal immunity in Arabidopsis.</title>
        <authorList>
            <person name="Meng P.H."/>
            <person name="Raynaud C."/>
            <person name="Tcherkez G."/>
            <person name="Blanchet S."/>
            <person name="Massoud K."/>
            <person name="Domenichini S."/>
            <person name="Henry Y."/>
            <person name="Soubigou-Taconnat L."/>
            <person name="Lelarge-Trouverie C."/>
            <person name="Saindrenan P."/>
            <person name="Renou J.P."/>
            <person name="Bergounioux C."/>
        </authorList>
    </citation>
    <scope>DISRUPTION PHENOTYPE</scope>
</reference>
<reference key="8">
    <citation type="journal article" date="2010" name="Plant Cell">
        <title>The Arabidopsis thaliana Myo-inositol 1-phosphate synthase1 gene is required for Myo-inositol synthesis and suppression of cell death.</title>
        <authorList>
            <person name="Donahue J.L."/>
            <person name="Alford S.R."/>
            <person name="Torabinejad J."/>
            <person name="Kerwin R.E."/>
            <person name="Nourbakhsh A."/>
            <person name="Ray W.K."/>
            <person name="Hernick M."/>
            <person name="Huang X."/>
            <person name="Lyons B.M."/>
            <person name="Hein P.P."/>
            <person name="Gillaspy G.E."/>
        </authorList>
    </citation>
    <scope>FUNCTION</scope>
    <scope>CATALYTIC ACTIVITY</scope>
    <scope>BIOPHYSICOCHEMICAL PROPERTIES</scope>
    <scope>TISSUE SPECIFICITY</scope>
    <scope>DISRUPTION PHENOTYPE</scope>
    <scope>SUBCELLULAR LOCATION</scope>
</reference>
<gene>
    <name type="primary">IPS2</name>
    <name type="synonym">MIPS2</name>
    <name type="ordered locus">At2g22240</name>
    <name type="ORF">T26C19.10</name>
</gene>